<protein>
    <recommendedName>
        <fullName evidence="1">Sugar fermentation stimulation protein homolog</fullName>
    </recommendedName>
</protein>
<gene>
    <name evidence="1" type="primary">sfsA</name>
    <name type="ordered locus">Mmar10_1047</name>
</gene>
<reference key="1">
    <citation type="submission" date="2006-08" db="EMBL/GenBank/DDBJ databases">
        <title>Complete sequence of Maricaulis maris MCS10.</title>
        <authorList>
            <consortium name="US DOE Joint Genome Institute"/>
            <person name="Copeland A."/>
            <person name="Lucas S."/>
            <person name="Lapidus A."/>
            <person name="Barry K."/>
            <person name="Detter J.C."/>
            <person name="Glavina del Rio T."/>
            <person name="Hammon N."/>
            <person name="Israni S."/>
            <person name="Dalin E."/>
            <person name="Tice H."/>
            <person name="Pitluck S."/>
            <person name="Saunders E."/>
            <person name="Brettin T."/>
            <person name="Bruce D."/>
            <person name="Han C."/>
            <person name="Tapia R."/>
            <person name="Gilna P."/>
            <person name="Schmutz J."/>
            <person name="Larimer F."/>
            <person name="Land M."/>
            <person name="Hauser L."/>
            <person name="Kyrpides N."/>
            <person name="Mikhailova N."/>
            <person name="Viollier P."/>
            <person name="Stephens C."/>
            <person name="Richardson P."/>
        </authorList>
    </citation>
    <scope>NUCLEOTIDE SEQUENCE [LARGE SCALE GENOMIC DNA]</scope>
    <source>
        <strain>MCS10</strain>
    </source>
</reference>
<organism>
    <name type="scientific">Maricaulis maris (strain MCS10)</name>
    <name type="common">Caulobacter maris</name>
    <dbReference type="NCBI Taxonomy" id="394221"/>
    <lineage>
        <taxon>Bacteria</taxon>
        <taxon>Pseudomonadati</taxon>
        <taxon>Pseudomonadota</taxon>
        <taxon>Alphaproteobacteria</taxon>
        <taxon>Maricaulales</taxon>
        <taxon>Maricaulaceae</taxon>
        <taxon>Maricaulis</taxon>
    </lineage>
</organism>
<evidence type="ECO:0000255" key="1">
    <source>
        <dbReference type="HAMAP-Rule" id="MF_00095"/>
    </source>
</evidence>
<sequence length="235" mass="25922">MKFPTDLIEGRLVKRYKRFFADVELADGEVVTAHCANTGAMTGIKTPGLPVWLSRSDNPKRKLKYTWELVEAEGTLIGALPNLANSLAEEAVNAGVISELTGYDSLRREVKYGENSRIDLLLEGNDRPPCWVEVKNVHWQRGPGIAEFPDGVTSRGAKHLVELANQVQAGERAVQLFIVQRSDCDVLRPAEDIDPVYARTLRDSAAAGVEVLAYACEVSPTAVIIHRPMRVELSQ</sequence>
<comment type="similarity">
    <text evidence="1">Belongs to the SfsA family.</text>
</comment>
<accession>Q0AQU7</accession>
<keyword id="KW-1185">Reference proteome</keyword>
<name>SFSA_MARMM</name>
<feature type="chain" id="PRO_1000007996" description="Sugar fermentation stimulation protein homolog">
    <location>
        <begin position="1"/>
        <end position="235"/>
    </location>
</feature>
<proteinExistence type="inferred from homology"/>
<dbReference type="EMBL" id="CP000449">
    <property type="protein sequence ID" value="ABI65340.1"/>
    <property type="molecule type" value="Genomic_DNA"/>
</dbReference>
<dbReference type="RefSeq" id="WP_011642987.1">
    <property type="nucleotide sequence ID" value="NC_008347.1"/>
</dbReference>
<dbReference type="SMR" id="Q0AQU7"/>
<dbReference type="STRING" id="394221.Mmar10_1047"/>
<dbReference type="KEGG" id="mmr:Mmar10_1047"/>
<dbReference type="eggNOG" id="COG1489">
    <property type="taxonomic scope" value="Bacteria"/>
</dbReference>
<dbReference type="HOGENOM" id="CLU_052299_2_0_5"/>
<dbReference type="OrthoDB" id="9802365at2"/>
<dbReference type="Proteomes" id="UP000001964">
    <property type="component" value="Chromosome"/>
</dbReference>
<dbReference type="GO" id="GO:0003677">
    <property type="term" value="F:DNA binding"/>
    <property type="evidence" value="ECO:0007669"/>
    <property type="project" value="InterPro"/>
</dbReference>
<dbReference type="CDD" id="cd22359">
    <property type="entry name" value="SfsA-like_bacterial"/>
    <property type="match status" value="1"/>
</dbReference>
<dbReference type="FunFam" id="2.40.50.580:FF:000001">
    <property type="entry name" value="Sugar fermentation stimulation protein A"/>
    <property type="match status" value="1"/>
</dbReference>
<dbReference type="Gene3D" id="2.40.50.580">
    <property type="match status" value="1"/>
</dbReference>
<dbReference type="Gene3D" id="3.40.1350.60">
    <property type="match status" value="1"/>
</dbReference>
<dbReference type="HAMAP" id="MF_00095">
    <property type="entry name" value="SfsA"/>
    <property type="match status" value="1"/>
</dbReference>
<dbReference type="InterPro" id="IPR005224">
    <property type="entry name" value="SfsA"/>
</dbReference>
<dbReference type="InterPro" id="IPR040452">
    <property type="entry name" value="SfsA_C"/>
</dbReference>
<dbReference type="InterPro" id="IPR041465">
    <property type="entry name" value="SfsA_N"/>
</dbReference>
<dbReference type="NCBIfam" id="TIGR00230">
    <property type="entry name" value="sfsA"/>
    <property type="match status" value="1"/>
</dbReference>
<dbReference type="PANTHER" id="PTHR30545">
    <property type="entry name" value="SUGAR FERMENTATION STIMULATION PROTEIN A"/>
    <property type="match status" value="1"/>
</dbReference>
<dbReference type="PANTHER" id="PTHR30545:SF2">
    <property type="entry name" value="SUGAR FERMENTATION STIMULATION PROTEIN A"/>
    <property type="match status" value="1"/>
</dbReference>
<dbReference type="Pfam" id="PF03749">
    <property type="entry name" value="SfsA"/>
    <property type="match status" value="1"/>
</dbReference>
<dbReference type="Pfam" id="PF17746">
    <property type="entry name" value="SfsA_N"/>
    <property type="match status" value="1"/>
</dbReference>